<dbReference type="EMBL" id="AE017220">
    <property type="protein sequence ID" value="AAX68161.1"/>
    <property type="molecule type" value="Genomic_DNA"/>
</dbReference>
<dbReference type="RefSeq" id="WP_000133618.1">
    <property type="nucleotide sequence ID" value="NC_006905.1"/>
</dbReference>
<dbReference type="SMR" id="Q57GK1"/>
<dbReference type="KEGG" id="sec:SCH_4255"/>
<dbReference type="HOGENOM" id="CLU_060699_3_2_6"/>
<dbReference type="Proteomes" id="UP000000538">
    <property type="component" value="Chromosome"/>
</dbReference>
<dbReference type="GO" id="GO:0005737">
    <property type="term" value="C:cytoplasm"/>
    <property type="evidence" value="ECO:0007669"/>
    <property type="project" value="UniProtKB-SubCell"/>
</dbReference>
<dbReference type="GO" id="GO:0003677">
    <property type="term" value="F:DNA binding"/>
    <property type="evidence" value="ECO:0007669"/>
    <property type="project" value="UniProtKB-KW"/>
</dbReference>
<dbReference type="GO" id="GO:0003700">
    <property type="term" value="F:DNA-binding transcription factor activity"/>
    <property type="evidence" value="ECO:0007669"/>
    <property type="project" value="InterPro"/>
</dbReference>
<dbReference type="GO" id="GO:0045892">
    <property type="term" value="P:negative regulation of DNA-templated transcription"/>
    <property type="evidence" value="ECO:0007669"/>
    <property type="project" value="UniProtKB-UniRule"/>
</dbReference>
<dbReference type="FunFam" id="1.10.10.10:FF:000160">
    <property type="entry name" value="HTH-type transcriptional regulator UlaR"/>
    <property type="match status" value="1"/>
</dbReference>
<dbReference type="Gene3D" id="1.10.10.10">
    <property type="entry name" value="Winged helix-like DNA-binding domain superfamily/Winged helix DNA-binding domain"/>
    <property type="match status" value="1"/>
</dbReference>
<dbReference type="HAMAP" id="MF_01563">
    <property type="entry name" value="HTH_type_UlaR"/>
    <property type="match status" value="1"/>
</dbReference>
<dbReference type="InterPro" id="IPR050313">
    <property type="entry name" value="Carb_Metab_HTH_regulators"/>
</dbReference>
<dbReference type="InterPro" id="IPR014036">
    <property type="entry name" value="DeoR-like_C"/>
</dbReference>
<dbReference type="InterPro" id="IPR001034">
    <property type="entry name" value="DeoR_HTH"/>
</dbReference>
<dbReference type="InterPro" id="IPR037171">
    <property type="entry name" value="NagB/RpiA_transferase-like"/>
</dbReference>
<dbReference type="InterPro" id="IPR018356">
    <property type="entry name" value="Tscrpt_reg_HTH_DeoR_CS"/>
</dbReference>
<dbReference type="InterPro" id="IPR023711">
    <property type="entry name" value="Tscrpt_reg_HTH_UlaR"/>
</dbReference>
<dbReference type="InterPro" id="IPR036388">
    <property type="entry name" value="WH-like_DNA-bd_sf"/>
</dbReference>
<dbReference type="InterPro" id="IPR036390">
    <property type="entry name" value="WH_DNA-bd_sf"/>
</dbReference>
<dbReference type="NCBIfam" id="NF010034">
    <property type="entry name" value="PRK13509.1"/>
    <property type="match status" value="1"/>
</dbReference>
<dbReference type="PANTHER" id="PTHR30363">
    <property type="entry name" value="HTH-TYPE TRANSCRIPTIONAL REGULATOR SRLR-RELATED"/>
    <property type="match status" value="1"/>
</dbReference>
<dbReference type="PANTHER" id="PTHR30363:SF55">
    <property type="entry name" value="HTH-TYPE TRANSCRIPTIONAL REGULATOR ULAR"/>
    <property type="match status" value="1"/>
</dbReference>
<dbReference type="Pfam" id="PF00455">
    <property type="entry name" value="DeoRC"/>
    <property type="match status" value="1"/>
</dbReference>
<dbReference type="Pfam" id="PF08220">
    <property type="entry name" value="HTH_DeoR"/>
    <property type="match status" value="1"/>
</dbReference>
<dbReference type="PRINTS" id="PR00037">
    <property type="entry name" value="HTHLACR"/>
</dbReference>
<dbReference type="SMART" id="SM01134">
    <property type="entry name" value="DeoRC"/>
    <property type="match status" value="1"/>
</dbReference>
<dbReference type="SMART" id="SM00420">
    <property type="entry name" value="HTH_DEOR"/>
    <property type="match status" value="1"/>
</dbReference>
<dbReference type="SUPFAM" id="SSF100950">
    <property type="entry name" value="NagB/RpiA/CoA transferase-like"/>
    <property type="match status" value="1"/>
</dbReference>
<dbReference type="SUPFAM" id="SSF46785">
    <property type="entry name" value="Winged helix' DNA-binding domain"/>
    <property type="match status" value="1"/>
</dbReference>
<dbReference type="PROSITE" id="PS00894">
    <property type="entry name" value="HTH_DEOR_1"/>
    <property type="match status" value="1"/>
</dbReference>
<dbReference type="PROSITE" id="PS51000">
    <property type="entry name" value="HTH_DEOR_2"/>
    <property type="match status" value="1"/>
</dbReference>
<gene>
    <name evidence="1" type="primary">ulaR</name>
    <name type="ordered locus">SCH_4255</name>
</gene>
<organism>
    <name type="scientific">Salmonella choleraesuis (strain SC-B67)</name>
    <dbReference type="NCBI Taxonomy" id="321314"/>
    <lineage>
        <taxon>Bacteria</taxon>
        <taxon>Pseudomonadati</taxon>
        <taxon>Pseudomonadota</taxon>
        <taxon>Gammaproteobacteria</taxon>
        <taxon>Enterobacterales</taxon>
        <taxon>Enterobacteriaceae</taxon>
        <taxon>Salmonella</taxon>
    </lineage>
</organism>
<feature type="chain" id="PRO_0000234022" description="HTH-type transcriptional regulator UlaR">
    <location>
        <begin position="1"/>
        <end position="251"/>
    </location>
</feature>
<feature type="domain" description="HTH deoR-type" evidence="1">
    <location>
        <begin position="3"/>
        <end position="58"/>
    </location>
</feature>
<feature type="DNA-binding region" description="H-T-H motif" evidence="1">
    <location>
        <begin position="20"/>
        <end position="39"/>
    </location>
</feature>
<proteinExistence type="inferred from homology"/>
<keyword id="KW-0963">Cytoplasm</keyword>
<keyword id="KW-0238">DNA-binding</keyword>
<keyword id="KW-0678">Repressor</keyword>
<keyword id="KW-0804">Transcription</keyword>
<keyword id="KW-0805">Transcription regulation</keyword>
<sequence length="251" mass="27487">MTEAQRHQILLDMLAQLGFVTVENVIERLGISPATARRDINKLDESGKLKKVRNGAEAITQQRPRWTPMNLHQAQNHDEKVRIAKAASQLVNPGESVVINCGSTAFLLGREMCGKPVQIITNYLPLANYLIDQEHDSVIIMGGQYNKSQSITLSPQGSENSLYAGHWMFTSGKGLTADGLYKTDMLTAMAEQKMLSVVGKLVALVDSSKIGERAGMLFSRADQIAMLITGKNANPQVLQQLEAQGVSILRV</sequence>
<accession>Q57GK1</accession>
<comment type="function">
    <text evidence="1">Represses ulaG and the ulaABCDEF operon.</text>
</comment>
<comment type="subcellular location">
    <subcellularLocation>
        <location evidence="1">Cytoplasm</location>
    </subcellularLocation>
</comment>
<evidence type="ECO:0000255" key="1">
    <source>
        <dbReference type="HAMAP-Rule" id="MF_01563"/>
    </source>
</evidence>
<protein>
    <recommendedName>
        <fullName evidence="1">HTH-type transcriptional regulator UlaR</fullName>
    </recommendedName>
</protein>
<reference key="1">
    <citation type="journal article" date="2005" name="Nucleic Acids Res.">
        <title>The genome sequence of Salmonella enterica serovar Choleraesuis, a highly invasive and resistant zoonotic pathogen.</title>
        <authorList>
            <person name="Chiu C.-H."/>
            <person name="Tang P."/>
            <person name="Chu C."/>
            <person name="Hu S."/>
            <person name="Bao Q."/>
            <person name="Yu J."/>
            <person name="Chou Y.-Y."/>
            <person name="Wang H.-S."/>
            <person name="Lee Y.-S."/>
        </authorList>
    </citation>
    <scope>NUCLEOTIDE SEQUENCE [LARGE SCALE GENOMIC DNA]</scope>
    <source>
        <strain>SC-B67</strain>
    </source>
</reference>
<name>ULAR_SALCH</name>